<protein>
    <recommendedName>
        <fullName>Wilms tumor protein 1-interacting protein</fullName>
        <shortName>WT1-interacting protein</shortName>
    </recommendedName>
</protein>
<keyword id="KW-0965">Cell junction</keyword>
<keyword id="KW-0970">Cilium biogenesis/degradation</keyword>
<keyword id="KW-0963">Cytoplasm</keyword>
<keyword id="KW-0440">LIM domain</keyword>
<keyword id="KW-0479">Metal-binding</keyword>
<keyword id="KW-0539">Nucleus</keyword>
<keyword id="KW-1267">Proteomics identification</keyword>
<keyword id="KW-1185">Reference proteome</keyword>
<keyword id="KW-0677">Repeat</keyword>
<keyword id="KW-0678">Repressor</keyword>
<keyword id="KW-0943">RNA-mediated gene silencing</keyword>
<keyword id="KW-0804">Transcription</keyword>
<keyword id="KW-0805">Transcription regulation</keyword>
<keyword id="KW-0862">Zinc</keyword>
<accession>A6NIX2</accession>
<dbReference type="EMBL" id="AC008747">
    <property type="status" value="NOT_ANNOTATED_CDS"/>
    <property type="molecule type" value="Genomic_DNA"/>
</dbReference>
<dbReference type="CCDS" id="CCDS59375.1"/>
<dbReference type="RefSeq" id="NP_001073905.1">
    <property type="nucleotide sequence ID" value="NM_001080436.2"/>
</dbReference>
<dbReference type="BioGRID" id="125985">
    <property type="interactions" value="13"/>
</dbReference>
<dbReference type="CORUM" id="A6NIX2"/>
<dbReference type="FunCoup" id="A6NIX2">
    <property type="interactions" value="241"/>
</dbReference>
<dbReference type="IntAct" id="A6NIX2">
    <property type="interactions" value="8"/>
</dbReference>
<dbReference type="STRING" id="9606.ENSP00000466953"/>
<dbReference type="iPTMnet" id="A6NIX2"/>
<dbReference type="PhosphoSitePlus" id="A6NIX2"/>
<dbReference type="BioMuta" id="WTIP"/>
<dbReference type="jPOST" id="A6NIX2"/>
<dbReference type="MassIVE" id="A6NIX2"/>
<dbReference type="PaxDb" id="9606-ENSP00000466953"/>
<dbReference type="PeptideAtlas" id="A6NIX2"/>
<dbReference type="ProteomicsDB" id="1294"/>
<dbReference type="Antibodypedia" id="56892">
    <property type="antibodies" value="66 antibodies from 12 providers"/>
</dbReference>
<dbReference type="DNASU" id="126374"/>
<dbReference type="Ensembl" id="ENST00000590071.7">
    <property type="protein sequence ID" value="ENSP00000466953.2"/>
    <property type="gene ID" value="ENSG00000142279.13"/>
</dbReference>
<dbReference type="GeneID" id="126374"/>
<dbReference type="KEGG" id="hsa:126374"/>
<dbReference type="MANE-Select" id="ENST00000590071.7">
    <property type="protein sequence ID" value="ENSP00000466953.2"/>
    <property type="RefSeq nucleotide sequence ID" value="NM_001080436.2"/>
    <property type="RefSeq protein sequence ID" value="NP_001073905.1"/>
</dbReference>
<dbReference type="UCSC" id="uc002nvm.4">
    <property type="organism name" value="human"/>
</dbReference>
<dbReference type="AGR" id="HGNC:20964"/>
<dbReference type="CTD" id="126374"/>
<dbReference type="DisGeNET" id="126374"/>
<dbReference type="GeneCards" id="WTIP"/>
<dbReference type="HGNC" id="HGNC:20964">
    <property type="gene designation" value="WTIP"/>
</dbReference>
<dbReference type="HPA" id="ENSG00000142279">
    <property type="expression patterns" value="Low tissue specificity"/>
</dbReference>
<dbReference type="MIM" id="614790">
    <property type="type" value="gene"/>
</dbReference>
<dbReference type="neXtProt" id="NX_A6NIX2"/>
<dbReference type="OpenTargets" id="ENSG00000142279"/>
<dbReference type="VEuPathDB" id="HostDB:ENSG00000142279"/>
<dbReference type="eggNOG" id="KOG1701">
    <property type="taxonomic scope" value="Eukaryota"/>
</dbReference>
<dbReference type="GeneTree" id="ENSGT00940000160924"/>
<dbReference type="HOGENOM" id="CLU_001357_11_3_1"/>
<dbReference type="InParanoid" id="A6NIX2"/>
<dbReference type="OMA" id="RELEPGC"/>
<dbReference type="OrthoDB" id="25414at2759"/>
<dbReference type="PAN-GO" id="A6NIX2">
    <property type="GO annotations" value="10 GO annotations based on evolutionary models"/>
</dbReference>
<dbReference type="TreeFam" id="TF320310"/>
<dbReference type="PathwayCommons" id="A6NIX2"/>
<dbReference type="Reactome" id="R-HSA-1234176">
    <property type="pathway name" value="Oxygen-dependent proline hydroxylation of Hypoxia-inducible Factor Alpha"/>
</dbReference>
<dbReference type="SignaLink" id="A6NIX2"/>
<dbReference type="BioGRID-ORCS" id="126374">
    <property type="hits" value="16 hits in 1153 CRISPR screens"/>
</dbReference>
<dbReference type="ChiTaRS" id="WTIP">
    <property type="organism name" value="human"/>
</dbReference>
<dbReference type="GenomeRNAi" id="126374"/>
<dbReference type="Pharos" id="A6NIX2">
    <property type="development level" value="Tbio"/>
</dbReference>
<dbReference type="PRO" id="PR:A6NIX2"/>
<dbReference type="Proteomes" id="UP000005640">
    <property type="component" value="Chromosome 19"/>
</dbReference>
<dbReference type="RNAct" id="A6NIX2">
    <property type="molecule type" value="protein"/>
</dbReference>
<dbReference type="Bgee" id="ENSG00000142279">
    <property type="expression patterns" value="Expressed in popliteal artery and 140 other cell types or tissues"/>
</dbReference>
<dbReference type="ExpressionAtlas" id="A6NIX2">
    <property type="expression patterns" value="baseline and differential"/>
</dbReference>
<dbReference type="GO" id="GO:0005912">
    <property type="term" value="C:adherens junction"/>
    <property type="evidence" value="ECO:0000318"/>
    <property type="project" value="GO_Central"/>
</dbReference>
<dbReference type="GO" id="GO:0005634">
    <property type="term" value="C:nucleus"/>
    <property type="evidence" value="ECO:0000318"/>
    <property type="project" value="GO_Central"/>
</dbReference>
<dbReference type="GO" id="GO:0000932">
    <property type="term" value="C:P-body"/>
    <property type="evidence" value="ECO:0000314"/>
    <property type="project" value="MGI"/>
</dbReference>
<dbReference type="GO" id="GO:0005667">
    <property type="term" value="C:transcription regulator complex"/>
    <property type="evidence" value="ECO:0000318"/>
    <property type="project" value="GO_Central"/>
</dbReference>
<dbReference type="GO" id="GO:0046872">
    <property type="term" value="F:metal ion binding"/>
    <property type="evidence" value="ECO:0007669"/>
    <property type="project" value="UniProtKB-KW"/>
</dbReference>
<dbReference type="GO" id="GO:0003714">
    <property type="term" value="F:transcription corepressor activity"/>
    <property type="evidence" value="ECO:0000318"/>
    <property type="project" value="GO_Central"/>
</dbReference>
<dbReference type="GO" id="GO:0030030">
    <property type="term" value="P:cell projection organization"/>
    <property type="evidence" value="ECO:0007669"/>
    <property type="project" value="UniProtKB-KW"/>
</dbReference>
<dbReference type="GO" id="GO:0007010">
    <property type="term" value="P:cytoskeleton organization"/>
    <property type="evidence" value="ECO:0000315"/>
    <property type="project" value="UniProtKB"/>
</dbReference>
<dbReference type="GO" id="GO:0035278">
    <property type="term" value="P:miRNA-mediated gene silencing by inhibition of translation"/>
    <property type="evidence" value="ECO:0000315"/>
    <property type="project" value="UniProtKB"/>
</dbReference>
<dbReference type="GO" id="GO:0035195">
    <property type="term" value="P:miRNA-mediated post-transcriptional gene silencing"/>
    <property type="evidence" value="ECO:0000315"/>
    <property type="project" value="MGI"/>
</dbReference>
<dbReference type="GO" id="GO:0035331">
    <property type="term" value="P:negative regulation of hippo signaling"/>
    <property type="evidence" value="ECO:0000314"/>
    <property type="project" value="UniProtKB"/>
</dbReference>
<dbReference type="GO" id="GO:0022604">
    <property type="term" value="P:regulation of cell morphogenesis"/>
    <property type="evidence" value="ECO:0000315"/>
    <property type="project" value="UniProtKB"/>
</dbReference>
<dbReference type="GO" id="GO:0006355">
    <property type="term" value="P:regulation of DNA-templated transcription"/>
    <property type="evidence" value="ECO:0000318"/>
    <property type="project" value="GO_Central"/>
</dbReference>
<dbReference type="GO" id="GO:0001666">
    <property type="term" value="P:response to hypoxia"/>
    <property type="evidence" value="ECO:0000314"/>
    <property type="project" value="UniProtKB"/>
</dbReference>
<dbReference type="CDD" id="cd09352">
    <property type="entry name" value="LIM1_Ajuba_like"/>
    <property type="match status" value="1"/>
</dbReference>
<dbReference type="CDD" id="cd09355">
    <property type="entry name" value="LIM2_Ajuba_like"/>
    <property type="match status" value="1"/>
</dbReference>
<dbReference type="CDD" id="cd09438">
    <property type="entry name" value="LIM3_Ajuba_like"/>
    <property type="match status" value="1"/>
</dbReference>
<dbReference type="FunFam" id="2.10.110.10:FF:000028">
    <property type="entry name" value="LIM domain-containing protein 1"/>
    <property type="match status" value="1"/>
</dbReference>
<dbReference type="FunFam" id="2.10.110.10:FF:000036">
    <property type="entry name" value="LIM domain-containing protein 1"/>
    <property type="match status" value="1"/>
</dbReference>
<dbReference type="FunFam" id="2.10.110.10:FF:000037">
    <property type="entry name" value="LIM domain-containing protein 1"/>
    <property type="match status" value="1"/>
</dbReference>
<dbReference type="Gene3D" id="2.10.110.10">
    <property type="entry name" value="Cysteine Rich Protein"/>
    <property type="match status" value="3"/>
</dbReference>
<dbReference type="InterPro" id="IPR047172">
    <property type="entry name" value="Ajuba-like"/>
</dbReference>
<dbReference type="InterPro" id="IPR047245">
    <property type="entry name" value="Ajuba-like_LIM1"/>
</dbReference>
<dbReference type="InterPro" id="IPR047247">
    <property type="entry name" value="Ajuba-like_LIM2"/>
</dbReference>
<dbReference type="InterPro" id="IPR047248">
    <property type="entry name" value="Ajuba-like_LIM3"/>
</dbReference>
<dbReference type="InterPro" id="IPR001781">
    <property type="entry name" value="Znf_LIM"/>
</dbReference>
<dbReference type="PANTHER" id="PTHR24219">
    <property type="entry name" value="LIM DOMAIN-CONTAINING PROTEIN JUB"/>
    <property type="match status" value="1"/>
</dbReference>
<dbReference type="PANTHER" id="PTHR24219:SF6">
    <property type="entry name" value="WILMS TUMOR PROTEIN 1-INTERACTING PROTEIN"/>
    <property type="match status" value="1"/>
</dbReference>
<dbReference type="Pfam" id="PF00412">
    <property type="entry name" value="LIM"/>
    <property type="match status" value="3"/>
</dbReference>
<dbReference type="SMART" id="SM00132">
    <property type="entry name" value="LIM"/>
    <property type="match status" value="3"/>
</dbReference>
<dbReference type="SUPFAM" id="SSF57716">
    <property type="entry name" value="Glucocorticoid receptor-like (DNA-binding domain)"/>
    <property type="match status" value="2"/>
</dbReference>
<dbReference type="PROSITE" id="PS00478">
    <property type="entry name" value="LIM_DOMAIN_1"/>
    <property type="match status" value="2"/>
</dbReference>
<dbReference type="PROSITE" id="PS50023">
    <property type="entry name" value="LIM_DOMAIN_2"/>
    <property type="match status" value="3"/>
</dbReference>
<organism>
    <name type="scientific">Homo sapiens</name>
    <name type="common">Human</name>
    <dbReference type="NCBI Taxonomy" id="9606"/>
    <lineage>
        <taxon>Eukaryota</taxon>
        <taxon>Metazoa</taxon>
        <taxon>Chordata</taxon>
        <taxon>Craniata</taxon>
        <taxon>Vertebrata</taxon>
        <taxon>Euteleostomi</taxon>
        <taxon>Mammalia</taxon>
        <taxon>Eutheria</taxon>
        <taxon>Euarchontoglires</taxon>
        <taxon>Primates</taxon>
        <taxon>Haplorrhini</taxon>
        <taxon>Catarrhini</taxon>
        <taxon>Hominidae</taxon>
        <taxon>Homo</taxon>
    </lineage>
</organism>
<gene>
    <name type="primary">WTIP</name>
</gene>
<feature type="chain" id="PRO_0000328860" description="Wilms tumor protein 1-interacting protein">
    <location>
        <begin position="1"/>
        <end position="430"/>
    </location>
</feature>
<feature type="domain" description="LIM zinc-binding 1" evidence="3">
    <location>
        <begin position="223"/>
        <end position="284"/>
    </location>
</feature>
<feature type="domain" description="LIM zinc-binding 2" evidence="3">
    <location>
        <begin position="288"/>
        <end position="348"/>
    </location>
</feature>
<feature type="domain" description="LIM zinc-binding 3" evidence="3">
    <location>
        <begin position="349"/>
        <end position="417"/>
    </location>
</feature>
<feature type="region of interest" description="Disordered" evidence="4">
    <location>
        <begin position="22"/>
        <end position="149"/>
    </location>
</feature>
<feature type="region of interest" description="Disordered" evidence="4">
    <location>
        <begin position="164"/>
        <end position="198"/>
    </location>
</feature>
<feature type="compositionally biased region" description="Low complexity" evidence="4">
    <location>
        <begin position="136"/>
        <end position="149"/>
    </location>
</feature>
<feature type="compositionally biased region" description="Pro residues" evidence="4">
    <location>
        <begin position="164"/>
        <end position="189"/>
    </location>
</feature>
<proteinExistence type="evidence at protein level"/>
<evidence type="ECO:0000250" key="1"/>
<evidence type="ECO:0000250" key="2">
    <source>
        <dbReference type="UniProtKB" id="A9LS46"/>
    </source>
</evidence>
<evidence type="ECO:0000255" key="3">
    <source>
        <dbReference type="PROSITE-ProRule" id="PRU00125"/>
    </source>
</evidence>
<evidence type="ECO:0000256" key="4">
    <source>
        <dbReference type="SAM" id="MobiDB-lite"/>
    </source>
</evidence>
<evidence type="ECO:0000269" key="5">
    <source>
    </source>
</evidence>
<evidence type="ECO:0000269" key="6">
    <source>
    </source>
</evidence>
<evidence type="ECO:0000269" key="7">
    <source>
    </source>
</evidence>
<evidence type="ECO:0000269" key="8">
    <source>
    </source>
</evidence>
<evidence type="ECO:0000305" key="9"/>
<sequence>MQRSRAGADEAALLLAGLALRELEPGCGSPGRGRRGPRPGPGDEAAPALGRRGKGSGGPEAGADGLSRGERGPRRAAVPELSAQPAGSPRASLAGSDGGGGGGSARSSGISLGYDQRHGSPRSGRSDPRPGPGPPSVGSARSSVSSLGSRGSAGAYADFLPPGACPAPARSPEPAGPAPFPLPALPLPPGREGGPSAAERRLEALTRELERALEARTARDYFGICIKCGLGIYGAQQACQAMGSLYHTDCFTCDSCGRRLRGKAFYNVGEKVYCQEDFLYSGFQQTADKCSVCGHLIMEMILQALGKSYHPGCFRCSVCNECLDGVPFTVDVENNIYCVRDYHTVFAPKCASCARPILPAQGCETTIRVVSMDRDYHVACYHCEDCGLQLSGEEGRRCYPLAGHLLCRRCHLRRLQPGPLPSPTVHVTEL</sequence>
<comment type="function">
    <text evidence="1 2 5 6 7 8">Adapter or scaffold protein which participates in the assembly of numerous protein complexes and is involved in several cellular processes such as cell fate determination, cytoskeletal organization, repression of gene transcription, cell-cell adhesion, cell differentiation, proliferation and migration. Positively regulates microRNA (miRNA)-mediated gene silencing. Negatively regulates Hippo signaling pathway and antagonizes phosphorylation of YAP1. Acts as a transcriptional corepressor for SNAI1 and SNAI2/SLUG-dependent repression of E-cadherin transcription. Acts as a hypoxic regulator by bridging an association between the prolyl hydroxylases and VHL enabling efficient degradation of HIF1A. In podocytes, may play a role in the regulation of actin dynamics and/or foot process cytoarchitecture (By similarity). In the course of podocyte injury, shuttles into the nucleus and acts as a transcription regulator that represses WT1-dependent transcription regulation, thereby translating changes in slit diaphragm structure into altered gene expression and a less differentiated phenotype. Involved in the organization of the basal body (By similarity). Involved in cilia growth and positioning (By similarity).</text>
</comment>
<comment type="subunit">
    <text evidence="1 2">Forms homodimers (By similarity). Interacts with CD2AP and WT1. Interacts (via LIM domains) with SNAI1 (via SNAG domain), SNAI2/SLUG (via SNAG domain) and SCRT1 (via SNAG domain) (By similarity). Interacts with EIF4E, AGO1, AGO2, DCP2, DDX6, LATS1, LATS2, SAV1, EGLN2/PHD1 and EGLN3/PHD3. Interacts (via LIM domains) with isoform 1 and isoform 3 of VHL. Interacts with ROR2 (By similarity). Following treatment with bacterial lipopolysaccharide (LPS), forms a complex with MAPK8IP3 and dynein intermediate chain (By similarity). Interacts with PRICKLE3 (By similarity).</text>
</comment>
<comment type="interaction">
    <interactant intactId="EBI-20730502">
        <id>A6NIX2</id>
    </interactant>
    <interactant intactId="EBI-2267883">
        <id>Q9H9G7</id>
        <label>AGO3</label>
    </interactant>
    <organismsDiffer>false</organismsDiffer>
    <experiments>3</experiments>
</comment>
<comment type="interaction">
    <interactant intactId="EBI-20730502">
        <id>A6NIX2</id>
    </interactant>
    <interactant intactId="EBI-357345">
        <id>Q14160</id>
        <label>SCRIB</label>
    </interactant>
    <organismsDiffer>false</organismsDiffer>
    <experiments>2</experiments>
</comment>
<comment type="subcellular location">
    <subcellularLocation>
        <location>Cell junction</location>
        <location>Adherens junction</location>
    </subcellularLocation>
    <subcellularLocation>
        <location evidence="1">Nucleus</location>
    </subcellularLocation>
    <subcellularLocation>
        <location>Cytoplasm</location>
        <location>P-body</location>
    </subcellularLocation>
    <text evidence="1">Following podocyte injury, caused by treatment with LPS, puromycin aminonucleoside, ultraviolet or hydrogen peroxide, translocates from sites of cell-cell contacts into the cytosol and nucleus. The shift from cell contacts to intracellular plaques starts as early as 1 hour after LPS stimulation and intranuclear localization begins 3 hours after LPS treatment. Maximal nuclear localization is achieved 6 hours after LPS treatment. Nuclear translocation requires dynein motor activity and intact microtubule network (By similarity). Returns to cell-cell contacts 24 hours after LPS stimulation. In the presence of ROR2, localizes to the plasma membrane (By similarity).</text>
</comment>
<comment type="similarity">
    <text evidence="9">Belongs to the zyxin/ajuba family.</text>
</comment>
<reference key="1">
    <citation type="journal article" date="2004" name="Nature">
        <title>The DNA sequence and biology of human chromosome 19.</title>
        <authorList>
            <person name="Grimwood J."/>
            <person name="Gordon L.A."/>
            <person name="Olsen A.S."/>
            <person name="Terry A."/>
            <person name="Schmutz J."/>
            <person name="Lamerdin J.E."/>
            <person name="Hellsten U."/>
            <person name="Goodstein D."/>
            <person name="Couronne O."/>
            <person name="Tran-Gyamfi M."/>
            <person name="Aerts A."/>
            <person name="Altherr M."/>
            <person name="Ashworth L."/>
            <person name="Bajorek E."/>
            <person name="Black S."/>
            <person name="Branscomb E."/>
            <person name="Caenepeel S."/>
            <person name="Carrano A.V."/>
            <person name="Caoile C."/>
            <person name="Chan Y.M."/>
            <person name="Christensen M."/>
            <person name="Cleland C.A."/>
            <person name="Copeland A."/>
            <person name="Dalin E."/>
            <person name="Dehal P."/>
            <person name="Denys M."/>
            <person name="Detter J.C."/>
            <person name="Escobar J."/>
            <person name="Flowers D."/>
            <person name="Fotopulos D."/>
            <person name="Garcia C."/>
            <person name="Georgescu A.M."/>
            <person name="Glavina T."/>
            <person name="Gomez M."/>
            <person name="Gonzales E."/>
            <person name="Groza M."/>
            <person name="Hammon N."/>
            <person name="Hawkins T."/>
            <person name="Haydu L."/>
            <person name="Ho I."/>
            <person name="Huang W."/>
            <person name="Israni S."/>
            <person name="Jett J."/>
            <person name="Kadner K."/>
            <person name="Kimball H."/>
            <person name="Kobayashi A."/>
            <person name="Larionov V."/>
            <person name="Leem S.-H."/>
            <person name="Lopez F."/>
            <person name="Lou Y."/>
            <person name="Lowry S."/>
            <person name="Malfatti S."/>
            <person name="Martinez D."/>
            <person name="McCready P.M."/>
            <person name="Medina C."/>
            <person name="Morgan J."/>
            <person name="Nelson K."/>
            <person name="Nolan M."/>
            <person name="Ovcharenko I."/>
            <person name="Pitluck S."/>
            <person name="Pollard M."/>
            <person name="Popkie A.P."/>
            <person name="Predki P."/>
            <person name="Quan G."/>
            <person name="Ramirez L."/>
            <person name="Rash S."/>
            <person name="Retterer J."/>
            <person name="Rodriguez A."/>
            <person name="Rogers S."/>
            <person name="Salamov A."/>
            <person name="Salazar A."/>
            <person name="She X."/>
            <person name="Smith D."/>
            <person name="Slezak T."/>
            <person name="Solovyev V."/>
            <person name="Thayer N."/>
            <person name="Tice H."/>
            <person name="Tsai M."/>
            <person name="Ustaszewska A."/>
            <person name="Vo N."/>
            <person name="Wagner M."/>
            <person name="Wheeler J."/>
            <person name="Wu K."/>
            <person name="Xie G."/>
            <person name="Yang J."/>
            <person name="Dubchak I."/>
            <person name="Furey T.S."/>
            <person name="DeJong P."/>
            <person name="Dickson M."/>
            <person name="Gordon D."/>
            <person name="Eichler E.E."/>
            <person name="Pennacchio L.A."/>
            <person name="Richardson P."/>
            <person name="Stubbs L."/>
            <person name="Rokhsar D.S."/>
            <person name="Myers R.M."/>
            <person name="Rubin E.M."/>
            <person name="Lucas S.M."/>
        </authorList>
    </citation>
    <scope>NUCLEOTIDE SEQUENCE [LARGE SCALE GENOMIC DNA]</scope>
</reference>
<reference key="2">
    <citation type="journal article" date="2010" name="Curr. Biol.">
        <title>Ajuba LIM proteins are negative regulators of the Hippo signaling pathway.</title>
        <authorList>
            <person name="Das Thakur M."/>
            <person name="Feng Y."/>
            <person name="Jagannathan R."/>
            <person name="Seppa M.J."/>
            <person name="Skeath J.B."/>
            <person name="Longmore G.D."/>
        </authorList>
    </citation>
    <scope>FUNCTION</scope>
    <scope>INTERACTION WITH LATS1; LATS2 AND SAV1</scope>
</reference>
<reference key="3">
    <citation type="journal article" date="2010" name="J. Biol. Chem.">
        <title>Podocyte injury induces nuclear translocation of WTIP via microtubule-dependent transport.</title>
        <authorList>
            <person name="Kim J.H."/>
            <person name="Konieczkowski M."/>
            <person name="Mukherjee A."/>
            <person name="Schechtman S."/>
            <person name="Khan S."/>
            <person name="Schelling J.R."/>
            <person name="Ross M.D."/>
            <person name="Bruggeman L.A."/>
            <person name="Sedor J.R."/>
        </authorList>
    </citation>
    <scope>SUBCELLULAR LOCATION</scope>
</reference>
<reference key="4">
    <citation type="journal article" date="2010" name="Proc. Natl. Acad. Sci. U.S.A.">
        <title>LIM-domain proteins, LIMD1, Ajuba, and WTIP are required for microRNA-mediated gene silencing.</title>
        <authorList>
            <person name="James V."/>
            <person name="Zhang Y."/>
            <person name="Foxler D.E."/>
            <person name="de Moor C.H."/>
            <person name="Kong Y.W."/>
            <person name="Webb T.M."/>
            <person name="Self T.J."/>
            <person name="Feng Y."/>
            <person name="Lagos D."/>
            <person name="Chu C.Y."/>
            <person name="Rana T.M."/>
            <person name="Morley S.J."/>
            <person name="Longmore G.D."/>
            <person name="Bushell M."/>
            <person name="Sharp T.V."/>
        </authorList>
    </citation>
    <scope>FUNCTION</scope>
    <scope>SUBCELLULAR LOCATION</scope>
    <scope>INTERACTION WITH EIF4E; AGO1; AGO2; DCP2 AND DDX6</scope>
</reference>
<reference key="5">
    <citation type="journal article" date="2011" name="BMC Biol.">
        <title>Identification and characterization of a set of conserved and new regulators of cytoskeletal organisation, cell morphology and migration.</title>
        <authorList>
            <person name="Bai S.W."/>
            <person name="Herrera-Abreu M.T."/>
            <person name="Rohn J.L."/>
            <person name="Racine V."/>
            <person name="Tajadura V."/>
            <person name="Suryavanshi N."/>
            <person name="Bechtel S."/>
            <person name="Wiemann S."/>
            <person name="Baum B."/>
            <person name="Ridley A.J."/>
        </authorList>
    </citation>
    <scope>FUNCTION</scope>
</reference>
<reference key="6">
    <citation type="journal article" date="2012" name="Nat. Cell Biol.">
        <title>The LIMD1 protein bridges an association between the prolyl hydroxylases and VHL to repress HIF-1 activity.</title>
        <authorList>
            <person name="Foxler D.E."/>
            <person name="Bridge K.S."/>
            <person name="James V."/>
            <person name="Webb T.M."/>
            <person name="Mee M."/>
            <person name="Wong S.C."/>
            <person name="Feng Y."/>
            <person name="Constantin-Teodosiu D."/>
            <person name="Petursdottir T.E."/>
            <person name="Bjornsson J."/>
            <person name="Ingvarsson S."/>
            <person name="Ratcliffe P.J."/>
            <person name="Longmore G.D."/>
            <person name="Sharp T.V."/>
        </authorList>
    </citation>
    <scope>FUNCTION</scope>
    <scope>INTERACTION WITH EGLN2/PHD1; EGLN3/PHD3 AND VHL</scope>
</reference>
<name>WTIP_HUMAN</name>